<keyword id="KW-0143">Chaperone</keyword>
<keyword id="KW-0963">Cytoplasm</keyword>
<keyword id="KW-0235">DNA replication</keyword>
<keyword id="KW-0479">Metal-binding</keyword>
<keyword id="KW-1185">Reference proteome</keyword>
<keyword id="KW-0677">Repeat</keyword>
<keyword id="KW-0346">Stress response</keyword>
<keyword id="KW-0862">Zinc</keyword>
<keyword id="KW-0863">Zinc-finger</keyword>
<gene>
    <name evidence="1" type="primary">dnaJ</name>
    <name type="ordered locus">FN0118</name>
</gene>
<name>DNAJ_FUSNN</name>
<accession>Q8RH03</accession>
<protein>
    <recommendedName>
        <fullName evidence="1">Chaperone protein DnaJ</fullName>
    </recommendedName>
</protein>
<organism>
    <name type="scientific">Fusobacterium nucleatum subsp. nucleatum (strain ATCC 25586 / DSM 15643 / BCRC 10681 / CIP 101130 / JCM 8532 / KCTC 2640 / LMG 13131 / VPI 4355)</name>
    <dbReference type="NCBI Taxonomy" id="190304"/>
    <lineage>
        <taxon>Bacteria</taxon>
        <taxon>Fusobacteriati</taxon>
        <taxon>Fusobacteriota</taxon>
        <taxon>Fusobacteriia</taxon>
        <taxon>Fusobacteriales</taxon>
        <taxon>Fusobacteriaceae</taxon>
        <taxon>Fusobacterium</taxon>
    </lineage>
</organism>
<reference key="1">
    <citation type="journal article" date="2002" name="J. Bacteriol.">
        <title>Genome sequence and analysis of the oral bacterium Fusobacterium nucleatum strain ATCC 25586.</title>
        <authorList>
            <person name="Kapatral V."/>
            <person name="Anderson I."/>
            <person name="Ivanova N."/>
            <person name="Reznik G."/>
            <person name="Los T."/>
            <person name="Lykidis A."/>
            <person name="Bhattacharyya A."/>
            <person name="Bartman A."/>
            <person name="Gardner W."/>
            <person name="Grechkin G."/>
            <person name="Zhu L."/>
            <person name="Vasieva O."/>
            <person name="Chu L."/>
            <person name="Kogan Y."/>
            <person name="Chaga O."/>
            <person name="Goltsman E."/>
            <person name="Bernal A."/>
            <person name="Larsen N."/>
            <person name="D'Souza M."/>
            <person name="Walunas T."/>
            <person name="Pusch G."/>
            <person name="Haselkorn R."/>
            <person name="Fonstein M."/>
            <person name="Kyrpides N.C."/>
            <person name="Overbeek R."/>
        </authorList>
    </citation>
    <scope>NUCLEOTIDE SEQUENCE [LARGE SCALE GENOMIC DNA]</scope>
    <source>
        <strain>ATCC 25586 / DSM 15643 / BCRC 10681 / CIP 101130 / JCM 8532 / KCTC 2640 / LMG 13131 / VPI 4355</strain>
    </source>
</reference>
<comment type="function">
    <text evidence="1">Participates actively in the response to hyperosmotic and heat shock by preventing the aggregation of stress-denatured proteins and by disaggregating proteins, also in an autonomous, DnaK-independent fashion. Unfolded proteins bind initially to DnaJ; upon interaction with the DnaJ-bound protein, DnaK hydrolyzes its bound ATP, resulting in the formation of a stable complex. GrpE releases ADP from DnaK; ATP binding to DnaK triggers the release of the substrate protein, thus completing the reaction cycle. Several rounds of ATP-dependent interactions between DnaJ, DnaK and GrpE are required for fully efficient folding. Also involved, together with DnaK and GrpE, in the DNA replication of plasmids through activation of initiation proteins.</text>
</comment>
<comment type="cofactor">
    <cofactor evidence="1">
        <name>Zn(2+)</name>
        <dbReference type="ChEBI" id="CHEBI:29105"/>
    </cofactor>
    <text evidence="1">Binds 2 Zn(2+) ions per monomer.</text>
</comment>
<comment type="subunit">
    <text evidence="1">Homodimer.</text>
</comment>
<comment type="subcellular location">
    <subcellularLocation>
        <location evidence="1">Cytoplasm</location>
    </subcellularLocation>
</comment>
<comment type="domain">
    <text evidence="1">The J domain is necessary and sufficient to stimulate DnaK ATPase activity. Zinc center 1 plays an important role in the autonomous, DnaK-independent chaperone activity of DnaJ. Zinc center 2 is essential for interaction with DnaK and for DnaJ activity.</text>
</comment>
<comment type="similarity">
    <text evidence="1">Belongs to the DnaJ family.</text>
</comment>
<proteinExistence type="inferred from homology"/>
<sequence>MAKRDYYEVLGIDKSASENDIKKAYRKAAMKYHPDKFANASDAEKKDAEEKFKEINEAYQILSDSQKKQQYDQFGHAAFEQGGAGFGGGFNAGGFDFGDIFGDIFGGGGFGGFEGFSGFGGSSRRSYVEPGNDLRYNLEITLEEAAKGVEKTIKYKRTGKCENCHGTGGEDDKMKTCPTCNGQGTIRTQQRTILGVMQSQSVCPDCHGTGKVPEKKCKHCHGTGTAKETVEKKVNVPAGIDDGQKLKYAGLGEASQNGGPNGDLYVVIRIKSHDIFVRDGENLYCEVPISYSTAVLGGEVEIPTLNGKKMIKVPEGTESGKLLKVKGEGIKSLRGYGQGDIIVKITIETPKKLTDKQKELLQKFEESLNEKNYEQKSSFMKKVKKFFKDIID</sequence>
<feature type="chain" id="PRO_0000070787" description="Chaperone protein DnaJ">
    <location>
        <begin position="1"/>
        <end position="392"/>
    </location>
</feature>
<feature type="domain" description="J" evidence="1">
    <location>
        <begin position="5"/>
        <end position="75"/>
    </location>
</feature>
<feature type="repeat" description="CXXCXGXG motif">
    <location>
        <begin position="161"/>
        <end position="168"/>
    </location>
</feature>
<feature type="repeat" description="CXXCXGXG motif">
    <location>
        <begin position="177"/>
        <end position="184"/>
    </location>
</feature>
<feature type="repeat" description="CXXCXGXG motif">
    <location>
        <begin position="203"/>
        <end position="210"/>
    </location>
</feature>
<feature type="repeat" description="CXXCXGXG motif">
    <location>
        <begin position="217"/>
        <end position="224"/>
    </location>
</feature>
<feature type="zinc finger region" description="CR-type" evidence="1">
    <location>
        <begin position="148"/>
        <end position="229"/>
    </location>
</feature>
<feature type="binding site" evidence="1">
    <location>
        <position position="161"/>
    </location>
    <ligand>
        <name>Zn(2+)</name>
        <dbReference type="ChEBI" id="CHEBI:29105"/>
        <label>1</label>
    </ligand>
</feature>
<feature type="binding site" evidence="1">
    <location>
        <position position="164"/>
    </location>
    <ligand>
        <name>Zn(2+)</name>
        <dbReference type="ChEBI" id="CHEBI:29105"/>
        <label>1</label>
    </ligand>
</feature>
<feature type="binding site" evidence="1">
    <location>
        <position position="177"/>
    </location>
    <ligand>
        <name>Zn(2+)</name>
        <dbReference type="ChEBI" id="CHEBI:29105"/>
        <label>2</label>
    </ligand>
</feature>
<feature type="binding site" evidence="1">
    <location>
        <position position="180"/>
    </location>
    <ligand>
        <name>Zn(2+)</name>
        <dbReference type="ChEBI" id="CHEBI:29105"/>
        <label>2</label>
    </ligand>
</feature>
<feature type="binding site" evidence="1">
    <location>
        <position position="203"/>
    </location>
    <ligand>
        <name>Zn(2+)</name>
        <dbReference type="ChEBI" id="CHEBI:29105"/>
        <label>2</label>
    </ligand>
</feature>
<feature type="binding site" evidence="1">
    <location>
        <position position="206"/>
    </location>
    <ligand>
        <name>Zn(2+)</name>
        <dbReference type="ChEBI" id="CHEBI:29105"/>
        <label>2</label>
    </ligand>
</feature>
<feature type="binding site" evidence="1">
    <location>
        <position position="217"/>
    </location>
    <ligand>
        <name>Zn(2+)</name>
        <dbReference type="ChEBI" id="CHEBI:29105"/>
        <label>1</label>
    </ligand>
</feature>
<feature type="binding site" evidence="1">
    <location>
        <position position="220"/>
    </location>
    <ligand>
        <name>Zn(2+)</name>
        <dbReference type="ChEBI" id="CHEBI:29105"/>
        <label>1</label>
    </ligand>
</feature>
<evidence type="ECO:0000255" key="1">
    <source>
        <dbReference type="HAMAP-Rule" id="MF_01152"/>
    </source>
</evidence>
<dbReference type="EMBL" id="AE009951">
    <property type="protein sequence ID" value="AAL94327.1"/>
    <property type="molecule type" value="Genomic_DNA"/>
</dbReference>
<dbReference type="RefSeq" id="NP_603028.1">
    <property type="nucleotide sequence ID" value="NC_003454.1"/>
</dbReference>
<dbReference type="RefSeq" id="WP_011016154.1">
    <property type="nucleotide sequence ID" value="NZ_CP028101.1"/>
</dbReference>
<dbReference type="SMR" id="Q8RH03"/>
<dbReference type="FunCoup" id="Q8RH03">
    <property type="interactions" value="390"/>
</dbReference>
<dbReference type="STRING" id="190304.FN0118"/>
<dbReference type="PaxDb" id="190304-FN0118"/>
<dbReference type="EnsemblBacteria" id="AAL94327">
    <property type="protein sequence ID" value="AAL94327"/>
    <property type="gene ID" value="FN0118"/>
</dbReference>
<dbReference type="GeneID" id="79782755"/>
<dbReference type="KEGG" id="fnu:FN0118"/>
<dbReference type="PATRIC" id="fig|190304.8.peg.704"/>
<dbReference type="eggNOG" id="COG0484">
    <property type="taxonomic scope" value="Bacteria"/>
</dbReference>
<dbReference type="HOGENOM" id="CLU_017633_0_7_0"/>
<dbReference type="InParanoid" id="Q8RH03"/>
<dbReference type="BioCyc" id="FNUC190304:G1FZS-728-MONOMER"/>
<dbReference type="Proteomes" id="UP000002521">
    <property type="component" value="Chromosome"/>
</dbReference>
<dbReference type="GO" id="GO:0005737">
    <property type="term" value="C:cytoplasm"/>
    <property type="evidence" value="ECO:0000318"/>
    <property type="project" value="GO_Central"/>
</dbReference>
<dbReference type="GO" id="GO:0005524">
    <property type="term" value="F:ATP binding"/>
    <property type="evidence" value="ECO:0007669"/>
    <property type="project" value="InterPro"/>
</dbReference>
<dbReference type="GO" id="GO:0031072">
    <property type="term" value="F:heat shock protein binding"/>
    <property type="evidence" value="ECO:0007669"/>
    <property type="project" value="InterPro"/>
</dbReference>
<dbReference type="GO" id="GO:0051082">
    <property type="term" value="F:unfolded protein binding"/>
    <property type="evidence" value="ECO:0000318"/>
    <property type="project" value="GO_Central"/>
</dbReference>
<dbReference type="GO" id="GO:0008270">
    <property type="term" value="F:zinc ion binding"/>
    <property type="evidence" value="ECO:0007669"/>
    <property type="project" value="UniProtKB-UniRule"/>
</dbReference>
<dbReference type="GO" id="GO:0051085">
    <property type="term" value="P:chaperone cofactor-dependent protein refolding"/>
    <property type="evidence" value="ECO:0000318"/>
    <property type="project" value="GO_Central"/>
</dbReference>
<dbReference type="GO" id="GO:0006260">
    <property type="term" value="P:DNA replication"/>
    <property type="evidence" value="ECO:0007669"/>
    <property type="project" value="UniProtKB-KW"/>
</dbReference>
<dbReference type="GO" id="GO:0042026">
    <property type="term" value="P:protein refolding"/>
    <property type="evidence" value="ECO:0000318"/>
    <property type="project" value="GO_Central"/>
</dbReference>
<dbReference type="GO" id="GO:0009408">
    <property type="term" value="P:response to heat"/>
    <property type="evidence" value="ECO:0007669"/>
    <property type="project" value="InterPro"/>
</dbReference>
<dbReference type="CDD" id="cd06257">
    <property type="entry name" value="DnaJ"/>
    <property type="match status" value="1"/>
</dbReference>
<dbReference type="CDD" id="cd10747">
    <property type="entry name" value="DnaJ_C"/>
    <property type="match status" value="1"/>
</dbReference>
<dbReference type="FunFam" id="1.10.287.110:FF:000031">
    <property type="entry name" value="Molecular chaperone DnaJ"/>
    <property type="match status" value="1"/>
</dbReference>
<dbReference type="FunFam" id="2.60.260.20:FF:000004">
    <property type="entry name" value="Molecular chaperone DnaJ"/>
    <property type="match status" value="1"/>
</dbReference>
<dbReference type="Gene3D" id="6.20.20.10">
    <property type="match status" value="2"/>
</dbReference>
<dbReference type="Gene3D" id="1.10.287.110">
    <property type="entry name" value="DnaJ domain"/>
    <property type="match status" value="1"/>
</dbReference>
<dbReference type="Gene3D" id="2.60.260.20">
    <property type="entry name" value="Urease metallochaperone UreE, N-terminal domain"/>
    <property type="match status" value="2"/>
</dbReference>
<dbReference type="HAMAP" id="MF_01152">
    <property type="entry name" value="DnaJ"/>
    <property type="match status" value="1"/>
</dbReference>
<dbReference type="InterPro" id="IPR012724">
    <property type="entry name" value="DnaJ"/>
</dbReference>
<dbReference type="InterPro" id="IPR002939">
    <property type="entry name" value="DnaJ_C"/>
</dbReference>
<dbReference type="InterPro" id="IPR001623">
    <property type="entry name" value="DnaJ_domain"/>
</dbReference>
<dbReference type="InterPro" id="IPR018253">
    <property type="entry name" value="DnaJ_domain_CS"/>
</dbReference>
<dbReference type="InterPro" id="IPR008971">
    <property type="entry name" value="HSP40/DnaJ_pept-bd"/>
</dbReference>
<dbReference type="InterPro" id="IPR001305">
    <property type="entry name" value="HSP_DnaJ_Cys-rich_dom"/>
</dbReference>
<dbReference type="InterPro" id="IPR036410">
    <property type="entry name" value="HSP_DnaJ_Cys-rich_dom_sf"/>
</dbReference>
<dbReference type="InterPro" id="IPR036869">
    <property type="entry name" value="J_dom_sf"/>
</dbReference>
<dbReference type="NCBIfam" id="TIGR02349">
    <property type="entry name" value="DnaJ_bact"/>
    <property type="match status" value="1"/>
</dbReference>
<dbReference type="NCBIfam" id="NF008035">
    <property type="entry name" value="PRK10767.1"/>
    <property type="match status" value="1"/>
</dbReference>
<dbReference type="PANTHER" id="PTHR43096:SF48">
    <property type="entry name" value="CHAPERONE PROTEIN DNAJ"/>
    <property type="match status" value="1"/>
</dbReference>
<dbReference type="PANTHER" id="PTHR43096">
    <property type="entry name" value="DNAJ HOMOLOG 1, MITOCHONDRIAL-RELATED"/>
    <property type="match status" value="1"/>
</dbReference>
<dbReference type="Pfam" id="PF00226">
    <property type="entry name" value="DnaJ"/>
    <property type="match status" value="1"/>
</dbReference>
<dbReference type="Pfam" id="PF01556">
    <property type="entry name" value="DnaJ_C"/>
    <property type="match status" value="1"/>
</dbReference>
<dbReference type="Pfam" id="PF00684">
    <property type="entry name" value="DnaJ_CXXCXGXG"/>
    <property type="match status" value="1"/>
</dbReference>
<dbReference type="PRINTS" id="PR00625">
    <property type="entry name" value="JDOMAIN"/>
</dbReference>
<dbReference type="SMART" id="SM00271">
    <property type="entry name" value="DnaJ"/>
    <property type="match status" value="1"/>
</dbReference>
<dbReference type="SUPFAM" id="SSF46565">
    <property type="entry name" value="Chaperone J-domain"/>
    <property type="match status" value="1"/>
</dbReference>
<dbReference type="SUPFAM" id="SSF57938">
    <property type="entry name" value="DnaJ/Hsp40 cysteine-rich domain"/>
    <property type="match status" value="1"/>
</dbReference>
<dbReference type="SUPFAM" id="SSF49493">
    <property type="entry name" value="HSP40/DnaJ peptide-binding domain"/>
    <property type="match status" value="2"/>
</dbReference>
<dbReference type="PROSITE" id="PS00636">
    <property type="entry name" value="DNAJ_1"/>
    <property type="match status" value="1"/>
</dbReference>
<dbReference type="PROSITE" id="PS50076">
    <property type="entry name" value="DNAJ_2"/>
    <property type="match status" value="1"/>
</dbReference>
<dbReference type="PROSITE" id="PS51188">
    <property type="entry name" value="ZF_CR"/>
    <property type="match status" value="1"/>
</dbReference>